<protein>
    <recommendedName>
        <fullName evidence="6">CDP-diacylglycerol--inositol 3-phosphatidyltransferase</fullName>
        <ecNumber evidence="3 4">2.7.8.11</ecNumber>
    </recommendedName>
    <alternativeName>
        <fullName>Phosphatidylinositol synthase</fullName>
        <shortName>PI synthase</shortName>
        <shortName>PtdIns synthase</shortName>
    </alternativeName>
</protein>
<reference key="1">
    <citation type="journal article" date="1997" name="J. Biol. Chem.">
        <title>The role of CDP-diacylglycerol synthetase and phosphatidylinositol synthase activity levels in the regulation of cellular phosphatidylinositol content.</title>
        <authorList>
            <person name="Lykidis A."/>
            <person name="Jackson P.D."/>
            <person name="Rock C.O."/>
            <person name="Jackowski S."/>
        </authorList>
    </citation>
    <scope>NUCLEOTIDE SEQUENCE [MRNA] (ISOFORM 1)</scope>
    <scope>CATALYTIC ACTIVITY</scope>
    <scope>FUNCTION</scope>
    <source>
        <tissue>Testis</tissue>
    </source>
</reference>
<reference key="2">
    <citation type="submission" date="2003-05" db="EMBL/GenBank/DDBJ databases">
        <title>Cloning of human full-length CDSs in BD Creator(TM) system donor vector.</title>
        <authorList>
            <person name="Kalnine N."/>
            <person name="Chen X."/>
            <person name="Rolfs A."/>
            <person name="Halleck A."/>
            <person name="Hines L."/>
            <person name="Eisenstein S."/>
            <person name="Koundinya M."/>
            <person name="Raphael J."/>
            <person name="Moreira D."/>
            <person name="Kelley T."/>
            <person name="LaBaer J."/>
            <person name="Lin Y."/>
            <person name="Phelan M."/>
            <person name="Farmer A."/>
        </authorList>
    </citation>
    <scope>NUCLEOTIDE SEQUENCE [LARGE SCALE MRNA] (ISOFORM 1)</scope>
</reference>
<reference key="3">
    <citation type="journal article" date="2004" name="Nat. Genet.">
        <title>Complete sequencing and characterization of 21,243 full-length human cDNAs.</title>
        <authorList>
            <person name="Ota T."/>
            <person name="Suzuki Y."/>
            <person name="Nishikawa T."/>
            <person name="Otsuki T."/>
            <person name="Sugiyama T."/>
            <person name="Irie R."/>
            <person name="Wakamatsu A."/>
            <person name="Hayashi K."/>
            <person name="Sato H."/>
            <person name="Nagai K."/>
            <person name="Kimura K."/>
            <person name="Makita H."/>
            <person name="Sekine M."/>
            <person name="Obayashi M."/>
            <person name="Nishi T."/>
            <person name="Shibahara T."/>
            <person name="Tanaka T."/>
            <person name="Ishii S."/>
            <person name="Yamamoto J."/>
            <person name="Saito K."/>
            <person name="Kawai Y."/>
            <person name="Isono Y."/>
            <person name="Nakamura Y."/>
            <person name="Nagahari K."/>
            <person name="Murakami K."/>
            <person name="Yasuda T."/>
            <person name="Iwayanagi T."/>
            <person name="Wagatsuma M."/>
            <person name="Shiratori A."/>
            <person name="Sudo H."/>
            <person name="Hosoiri T."/>
            <person name="Kaku Y."/>
            <person name="Kodaira H."/>
            <person name="Kondo H."/>
            <person name="Sugawara M."/>
            <person name="Takahashi M."/>
            <person name="Kanda K."/>
            <person name="Yokoi T."/>
            <person name="Furuya T."/>
            <person name="Kikkawa E."/>
            <person name="Omura Y."/>
            <person name="Abe K."/>
            <person name="Kamihara K."/>
            <person name="Katsuta N."/>
            <person name="Sato K."/>
            <person name="Tanikawa M."/>
            <person name="Yamazaki M."/>
            <person name="Ninomiya K."/>
            <person name="Ishibashi T."/>
            <person name="Yamashita H."/>
            <person name="Murakawa K."/>
            <person name="Fujimori K."/>
            <person name="Tanai H."/>
            <person name="Kimata M."/>
            <person name="Watanabe M."/>
            <person name="Hiraoka S."/>
            <person name="Chiba Y."/>
            <person name="Ishida S."/>
            <person name="Ono Y."/>
            <person name="Takiguchi S."/>
            <person name="Watanabe S."/>
            <person name="Yosida M."/>
            <person name="Hotuta T."/>
            <person name="Kusano J."/>
            <person name="Kanehori K."/>
            <person name="Takahashi-Fujii A."/>
            <person name="Hara H."/>
            <person name="Tanase T.-O."/>
            <person name="Nomura Y."/>
            <person name="Togiya S."/>
            <person name="Komai F."/>
            <person name="Hara R."/>
            <person name="Takeuchi K."/>
            <person name="Arita M."/>
            <person name="Imose N."/>
            <person name="Musashino K."/>
            <person name="Yuuki H."/>
            <person name="Oshima A."/>
            <person name="Sasaki N."/>
            <person name="Aotsuka S."/>
            <person name="Yoshikawa Y."/>
            <person name="Matsunawa H."/>
            <person name="Ichihara T."/>
            <person name="Shiohata N."/>
            <person name="Sano S."/>
            <person name="Moriya S."/>
            <person name="Momiyama H."/>
            <person name="Satoh N."/>
            <person name="Takami S."/>
            <person name="Terashima Y."/>
            <person name="Suzuki O."/>
            <person name="Nakagawa S."/>
            <person name="Senoh A."/>
            <person name="Mizoguchi H."/>
            <person name="Goto Y."/>
            <person name="Shimizu F."/>
            <person name="Wakebe H."/>
            <person name="Hishigaki H."/>
            <person name="Watanabe T."/>
            <person name="Sugiyama A."/>
            <person name="Takemoto M."/>
            <person name="Kawakami B."/>
            <person name="Yamazaki M."/>
            <person name="Watanabe K."/>
            <person name="Kumagai A."/>
            <person name="Itakura S."/>
            <person name="Fukuzumi Y."/>
            <person name="Fujimori Y."/>
            <person name="Komiyama M."/>
            <person name="Tashiro H."/>
            <person name="Tanigami A."/>
            <person name="Fujiwara T."/>
            <person name="Ono T."/>
            <person name="Yamada K."/>
            <person name="Fujii Y."/>
            <person name="Ozaki K."/>
            <person name="Hirao M."/>
            <person name="Ohmori Y."/>
            <person name="Kawabata A."/>
            <person name="Hikiji T."/>
            <person name="Kobatake N."/>
            <person name="Inagaki H."/>
            <person name="Ikema Y."/>
            <person name="Okamoto S."/>
            <person name="Okitani R."/>
            <person name="Kawakami T."/>
            <person name="Noguchi S."/>
            <person name="Itoh T."/>
            <person name="Shigeta K."/>
            <person name="Senba T."/>
            <person name="Matsumura K."/>
            <person name="Nakajima Y."/>
            <person name="Mizuno T."/>
            <person name="Morinaga M."/>
            <person name="Sasaki M."/>
            <person name="Togashi T."/>
            <person name="Oyama M."/>
            <person name="Hata H."/>
            <person name="Watanabe M."/>
            <person name="Komatsu T."/>
            <person name="Mizushima-Sugano J."/>
            <person name="Satoh T."/>
            <person name="Shirai Y."/>
            <person name="Takahashi Y."/>
            <person name="Nakagawa K."/>
            <person name="Okumura K."/>
            <person name="Nagase T."/>
            <person name="Nomura N."/>
            <person name="Kikuchi H."/>
            <person name="Masuho Y."/>
            <person name="Yamashita R."/>
            <person name="Nakai K."/>
            <person name="Yada T."/>
            <person name="Nakamura Y."/>
            <person name="Ohara O."/>
            <person name="Isogai T."/>
            <person name="Sugano S."/>
        </authorList>
    </citation>
    <scope>NUCLEOTIDE SEQUENCE [LARGE SCALE MRNA] (ISOFORMS 2 AND 3)</scope>
    <source>
        <tissue>Thymus</tissue>
    </source>
</reference>
<reference key="4">
    <citation type="submission" date="2004-06" db="EMBL/GenBank/DDBJ databases">
        <title>Cloning of human full open reading frames in Gateway(TM) system entry vector (pDONR201).</title>
        <authorList>
            <person name="Ebert L."/>
            <person name="Schick M."/>
            <person name="Neubert P."/>
            <person name="Schatten R."/>
            <person name="Henze S."/>
            <person name="Korn B."/>
        </authorList>
    </citation>
    <scope>NUCLEOTIDE SEQUENCE [LARGE SCALE MRNA] (ISOFORM 1)</scope>
</reference>
<reference key="5">
    <citation type="journal article" date="2004" name="Nature">
        <title>The sequence and analysis of duplication-rich human chromosome 16.</title>
        <authorList>
            <person name="Martin J."/>
            <person name="Han C."/>
            <person name="Gordon L.A."/>
            <person name="Terry A."/>
            <person name="Prabhakar S."/>
            <person name="She X."/>
            <person name="Xie G."/>
            <person name="Hellsten U."/>
            <person name="Chan Y.M."/>
            <person name="Altherr M."/>
            <person name="Couronne O."/>
            <person name="Aerts A."/>
            <person name="Bajorek E."/>
            <person name="Black S."/>
            <person name="Blumer H."/>
            <person name="Branscomb E."/>
            <person name="Brown N.C."/>
            <person name="Bruno W.J."/>
            <person name="Buckingham J.M."/>
            <person name="Callen D.F."/>
            <person name="Campbell C.S."/>
            <person name="Campbell M.L."/>
            <person name="Campbell E.W."/>
            <person name="Caoile C."/>
            <person name="Challacombe J.F."/>
            <person name="Chasteen L.A."/>
            <person name="Chertkov O."/>
            <person name="Chi H.C."/>
            <person name="Christensen M."/>
            <person name="Clark L.M."/>
            <person name="Cohn J.D."/>
            <person name="Denys M."/>
            <person name="Detter J.C."/>
            <person name="Dickson M."/>
            <person name="Dimitrijevic-Bussod M."/>
            <person name="Escobar J."/>
            <person name="Fawcett J.J."/>
            <person name="Flowers D."/>
            <person name="Fotopulos D."/>
            <person name="Glavina T."/>
            <person name="Gomez M."/>
            <person name="Gonzales E."/>
            <person name="Goodstein D."/>
            <person name="Goodwin L.A."/>
            <person name="Grady D.L."/>
            <person name="Grigoriev I."/>
            <person name="Groza M."/>
            <person name="Hammon N."/>
            <person name="Hawkins T."/>
            <person name="Haydu L."/>
            <person name="Hildebrand C.E."/>
            <person name="Huang W."/>
            <person name="Israni S."/>
            <person name="Jett J."/>
            <person name="Jewett P.B."/>
            <person name="Kadner K."/>
            <person name="Kimball H."/>
            <person name="Kobayashi A."/>
            <person name="Krawczyk M.-C."/>
            <person name="Leyba T."/>
            <person name="Longmire J.L."/>
            <person name="Lopez F."/>
            <person name="Lou Y."/>
            <person name="Lowry S."/>
            <person name="Ludeman T."/>
            <person name="Manohar C.F."/>
            <person name="Mark G.A."/>
            <person name="McMurray K.L."/>
            <person name="Meincke L.J."/>
            <person name="Morgan J."/>
            <person name="Moyzis R.K."/>
            <person name="Mundt M.O."/>
            <person name="Munk A.C."/>
            <person name="Nandkeshwar R.D."/>
            <person name="Pitluck S."/>
            <person name="Pollard M."/>
            <person name="Predki P."/>
            <person name="Parson-Quintana B."/>
            <person name="Ramirez L."/>
            <person name="Rash S."/>
            <person name="Retterer J."/>
            <person name="Ricke D.O."/>
            <person name="Robinson D.L."/>
            <person name="Rodriguez A."/>
            <person name="Salamov A."/>
            <person name="Saunders E.H."/>
            <person name="Scott D."/>
            <person name="Shough T."/>
            <person name="Stallings R.L."/>
            <person name="Stalvey M."/>
            <person name="Sutherland R.D."/>
            <person name="Tapia R."/>
            <person name="Tesmer J.G."/>
            <person name="Thayer N."/>
            <person name="Thompson L.S."/>
            <person name="Tice H."/>
            <person name="Torney D.C."/>
            <person name="Tran-Gyamfi M."/>
            <person name="Tsai M."/>
            <person name="Ulanovsky L.E."/>
            <person name="Ustaszewska A."/>
            <person name="Vo N."/>
            <person name="White P.S."/>
            <person name="Williams A.L."/>
            <person name="Wills P.L."/>
            <person name="Wu J.-R."/>
            <person name="Wu K."/>
            <person name="Yang J."/>
            <person name="DeJong P."/>
            <person name="Bruce D."/>
            <person name="Doggett N.A."/>
            <person name="Deaven L."/>
            <person name="Schmutz J."/>
            <person name="Grimwood J."/>
            <person name="Richardson P."/>
            <person name="Rokhsar D.S."/>
            <person name="Eichler E.E."/>
            <person name="Gilna P."/>
            <person name="Lucas S.M."/>
            <person name="Myers R.M."/>
            <person name="Rubin E.M."/>
            <person name="Pennacchio L.A."/>
        </authorList>
    </citation>
    <scope>NUCLEOTIDE SEQUENCE [LARGE SCALE GENOMIC DNA]</scope>
</reference>
<reference key="6">
    <citation type="journal article" date="2004" name="Genome Res.">
        <title>The status, quality, and expansion of the NIH full-length cDNA project: the Mammalian Gene Collection (MGC).</title>
        <authorList>
            <consortium name="The MGC Project Team"/>
        </authorList>
    </citation>
    <scope>NUCLEOTIDE SEQUENCE [LARGE SCALE MRNA]</scope>
    <source>
        <tissue>Placenta</tissue>
    </source>
</reference>
<reference key="7">
    <citation type="journal article" date="1994" name="Biochem. J.">
        <title>Purification and characterization of phosphatidylinositol synthase from human placenta.</title>
        <authorList>
            <person name="Antonsson B.E."/>
        </authorList>
    </citation>
    <scope>FUNCTION</scope>
    <scope>CATALYTIC ACTIVITY</scope>
    <scope>COFACTOR</scope>
    <scope>BIOPHYSICOCHEMICAL PROPERTIES</scope>
    <scope>SUBCELLULAR LOCATION</scope>
    <scope>TISSUE SPECIFICITY</scope>
    <source>
        <tissue>Placenta</tissue>
    </source>
</reference>
<reference key="8">
    <citation type="journal article" date="2011" name="BMC Syst. Biol.">
        <title>Initial characterization of the human central proteome.</title>
        <authorList>
            <person name="Burkard T.R."/>
            <person name="Planyavsky M."/>
            <person name="Kaupe I."/>
            <person name="Breitwieser F.P."/>
            <person name="Buerckstuemmer T."/>
            <person name="Bennett K.L."/>
            <person name="Superti-Furga G."/>
            <person name="Colinge J."/>
        </authorList>
    </citation>
    <scope>IDENTIFICATION BY MASS SPECTROMETRY [LARGE SCALE ANALYSIS]</scope>
</reference>
<organism>
    <name type="scientific">Homo sapiens</name>
    <name type="common">Human</name>
    <dbReference type="NCBI Taxonomy" id="9606"/>
    <lineage>
        <taxon>Eukaryota</taxon>
        <taxon>Metazoa</taxon>
        <taxon>Chordata</taxon>
        <taxon>Craniata</taxon>
        <taxon>Vertebrata</taxon>
        <taxon>Euteleostomi</taxon>
        <taxon>Mammalia</taxon>
        <taxon>Eutheria</taxon>
        <taxon>Euarchontoglires</taxon>
        <taxon>Primates</taxon>
        <taxon>Haplorrhini</taxon>
        <taxon>Catarrhini</taxon>
        <taxon>Hominidae</taxon>
        <taxon>Homo</taxon>
    </lineage>
</organism>
<sequence>MPDENIFLFVPNLIGYARIVFAIISFYFMPCCPLTASSFYLLSGLLDAFDGHAARALNQGTRFGAMLDMLTDRCSTMCLLVNLALLYPGATLFFQISMSLDVASHWLHLHSSVVRGSESHKMIDLSGNPVLRIYYTSRPALFTLCAGNELFYCLLYLFHFSEGPLVGSVGLFRMGLWVTAPIALLKSLISVIHLITAARNMAALDAADRAKKK</sequence>
<evidence type="ECO:0000250" key="1">
    <source>
        <dbReference type="UniProtKB" id="P9WPG7"/>
    </source>
</evidence>
<evidence type="ECO:0000255" key="2"/>
<evidence type="ECO:0000269" key="3">
    <source>
    </source>
</evidence>
<evidence type="ECO:0000269" key="4">
    <source>
    </source>
</evidence>
<evidence type="ECO:0000303" key="5">
    <source>
    </source>
</evidence>
<evidence type="ECO:0000305" key="6"/>
<evidence type="ECO:0000305" key="7">
    <source>
    </source>
</evidence>
<evidence type="ECO:0000305" key="8">
    <source>
    </source>
</evidence>
<evidence type="ECO:0000312" key="9">
    <source>
        <dbReference type="HGNC" id="HGNC:1769"/>
    </source>
</evidence>
<proteinExistence type="evidence at protein level"/>
<feature type="chain" id="PRO_0000056802" description="CDP-diacylglycerol--inositol 3-phosphatidyltransferase">
    <location>
        <begin position="1"/>
        <end position="213"/>
    </location>
</feature>
<feature type="topological domain" description="Cytoplasmic" evidence="6">
    <location>
        <begin position="1"/>
        <end position="5"/>
    </location>
</feature>
<feature type="transmembrane region" description="Helical" evidence="2">
    <location>
        <begin position="6"/>
        <end position="26"/>
    </location>
</feature>
<feature type="topological domain" description="Lumenal" evidence="6">
    <location>
        <position position="27"/>
    </location>
</feature>
<feature type="transmembrane region" description="Helical" evidence="2">
    <location>
        <begin position="28"/>
        <end position="48"/>
    </location>
</feature>
<feature type="topological domain" description="Cytoplasmic" evidence="6">
    <location>
        <begin position="49"/>
        <end position="73"/>
    </location>
</feature>
<feature type="transmembrane region" description="Helical" evidence="2">
    <location>
        <begin position="74"/>
        <end position="94"/>
    </location>
</feature>
<feature type="topological domain" description="Lumenal" evidence="6">
    <location>
        <position position="95"/>
    </location>
</feature>
<feature type="transmembrane region" description="Helical" evidence="6">
    <location>
        <begin position="96"/>
        <end position="116"/>
    </location>
</feature>
<feature type="topological domain" description="Cytoplasmic" evidence="6">
    <location>
        <begin position="117"/>
        <end position="139"/>
    </location>
</feature>
<feature type="transmembrane region" description="Helical" evidence="2">
    <location>
        <begin position="140"/>
        <end position="160"/>
    </location>
</feature>
<feature type="topological domain" description="Lumenal" evidence="6">
    <location>
        <begin position="161"/>
        <end position="174"/>
    </location>
</feature>
<feature type="transmembrane region" description="Helical" evidence="2">
    <location>
        <begin position="175"/>
        <end position="195"/>
    </location>
</feature>
<feature type="topological domain" description="Cytoplasmic" evidence="6">
    <location>
        <begin position="196"/>
        <end position="213"/>
    </location>
</feature>
<feature type="active site" description="Proton acceptor" evidence="1">
    <location>
        <position position="72"/>
    </location>
</feature>
<feature type="binding site" evidence="1">
    <location>
        <position position="47"/>
    </location>
    <ligand>
        <name>Mg(2+)</name>
        <dbReference type="ChEBI" id="CHEBI:18420"/>
        <label>1</label>
    </ligand>
</feature>
<feature type="binding site" evidence="1">
    <location>
        <position position="47"/>
    </location>
    <ligand>
        <name>Mg(2+)</name>
        <dbReference type="ChEBI" id="CHEBI:18420"/>
        <label>2</label>
    </ligand>
</feature>
<feature type="binding site" evidence="1">
    <location>
        <position position="50"/>
    </location>
    <ligand>
        <name>Mg(2+)</name>
        <dbReference type="ChEBI" id="CHEBI:18420"/>
        <label>1</label>
    </ligand>
</feature>
<feature type="binding site" evidence="1">
    <location>
        <position position="51"/>
    </location>
    <ligand>
        <name>a CDP-1,2-diacyl-sn-glycerol</name>
        <dbReference type="ChEBI" id="CHEBI:58332"/>
    </ligand>
</feature>
<feature type="binding site" evidence="1">
    <location>
        <position position="55"/>
    </location>
    <ligand>
        <name>a CDP-1,2-diacyl-sn-glycerol</name>
        <dbReference type="ChEBI" id="CHEBI:58332"/>
    </ligand>
</feature>
<feature type="binding site" evidence="1">
    <location>
        <position position="61"/>
    </location>
    <ligand>
        <name>a CDP-1,2-diacyl-sn-glycerol</name>
        <dbReference type="ChEBI" id="CHEBI:58332"/>
    </ligand>
</feature>
<feature type="binding site" evidence="1">
    <location>
        <position position="68"/>
    </location>
    <ligand>
        <name>Mg(2+)</name>
        <dbReference type="ChEBI" id="CHEBI:18420"/>
        <label>1</label>
    </ligand>
</feature>
<feature type="binding site" evidence="1">
    <location>
        <position position="68"/>
    </location>
    <ligand>
        <name>Mg(2+)</name>
        <dbReference type="ChEBI" id="CHEBI:18420"/>
        <label>2</label>
    </ligand>
</feature>
<feature type="binding site" evidence="1">
    <location>
        <position position="72"/>
    </location>
    <ligand>
        <name>Mg(2+)</name>
        <dbReference type="ChEBI" id="CHEBI:18420"/>
        <label>2</label>
    </ligand>
</feature>
<feature type="splice variant" id="VSP_013618" description="In isoform 2." evidence="5">
    <original>MPDENIFLFVPNLI</original>
    <variation>MLPTAAGFSIWGQVGAAREAPRCQTKISSCSCPTSSVSAAHGPGPNERARGLGGLPDPALSPRVPFQ</variation>
    <location>
        <begin position="1"/>
        <end position="14"/>
    </location>
</feature>
<feature type="splice variant" id="VSP_054767" description="In isoform 3." evidence="5">
    <location>
        <begin position="15"/>
        <end position="59"/>
    </location>
</feature>
<feature type="splice variant" id="VSP_013619" description="In isoform 2." evidence="5">
    <original>SSVVRGSESHKMIDLSGNP</original>
    <variation>RSAAILGAWATWRHYSGVG</variation>
    <location>
        <begin position="111"/>
        <end position="129"/>
    </location>
</feature>
<feature type="splice variant" id="VSP_013620" description="In isoform 2." evidence="5">
    <location>
        <begin position="130"/>
        <end position="213"/>
    </location>
</feature>
<feature type="sequence variant" id="VAR_048734" description="In dbSNP:rs1802002.">
    <original>R</original>
    <variation>C</variation>
    <location>
        <position position="199"/>
    </location>
</feature>
<feature type="sequence conflict" description="In Ref. 3; BAG62462." evidence="6" ref="3">
    <original>S</original>
    <variation>P</variation>
    <location>
        <position position="75"/>
    </location>
</feature>
<keyword id="KW-0025">Alternative splicing</keyword>
<keyword id="KW-1003">Cell membrane</keyword>
<keyword id="KW-0256">Endoplasmic reticulum</keyword>
<keyword id="KW-0444">Lipid biosynthesis</keyword>
<keyword id="KW-0443">Lipid metabolism</keyword>
<keyword id="KW-0460">Magnesium</keyword>
<keyword id="KW-0464">Manganese</keyword>
<keyword id="KW-0472">Membrane</keyword>
<keyword id="KW-0479">Metal-binding</keyword>
<keyword id="KW-0594">Phospholipid biosynthesis</keyword>
<keyword id="KW-1208">Phospholipid metabolism</keyword>
<keyword id="KW-1267">Proteomics identification</keyword>
<keyword id="KW-1185">Reference proteome</keyword>
<keyword id="KW-0808">Transferase</keyword>
<keyword id="KW-0812">Transmembrane</keyword>
<keyword id="KW-1133">Transmembrane helix</keyword>
<name>CDIPT_HUMAN</name>
<gene>
    <name evidence="9" type="primary">CDIPT</name>
    <name type="synonym">PIS</name>
    <name type="synonym">PIS1</name>
</gene>
<comment type="function">
    <text evidence="3 4">Catalyzes the biosynthesis of phosphatidylinositol (PtdIns) as well as PtdIns:inositol exchange reaction. May thus act to reduce an excessive cellular PtdIns content. The exchange activity is due to the reverse reaction of PtdIns synthase and is dependent on CMP, which is tightly bound to the enzyme.</text>
</comment>
<comment type="catalytic activity">
    <reaction evidence="3 4">
        <text>a CDP-1,2-diacyl-sn-glycerol + myo-inositol = a 1,2-diacyl-sn-glycero-3-phospho-(1D-myo-inositol) + CMP + H(+)</text>
        <dbReference type="Rhea" id="RHEA:11580"/>
        <dbReference type="ChEBI" id="CHEBI:15378"/>
        <dbReference type="ChEBI" id="CHEBI:17268"/>
        <dbReference type="ChEBI" id="CHEBI:57880"/>
        <dbReference type="ChEBI" id="CHEBI:58332"/>
        <dbReference type="ChEBI" id="CHEBI:60377"/>
        <dbReference type="EC" id="2.7.8.11"/>
    </reaction>
    <physiologicalReaction direction="left-to-right" evidence="8">
        <dbReference type="Rhea" id="RHEA:11581"/>
    </physiologicalReaction>
    <physiologicalReaction direction="right-to-left" evidence="8">
        <dbReference type="Rhea" id="RHEA:11582"/>
    </physiologicalReaction>
</comment>
<comment type="cofactor">
    <cofactor evidence="3">
        <name>Mn(2+)</name>
        <dbReference type="ChEBI" id="CHEBI:29035"/>
    </cofactor>
    <cofactor evidence="3">
        <name>Mg(2+)</name>
        <dbReference type="ChEBI" id="CHEBI:18420"/>
    </cofactor>
    <text evidence="3">Catalytic activity is higher with Mg(2+).</text>
</comment>
<comment type="activity regulation">
    <text>Inhibited by PtdIns (product inhibition), phosphatidylinositol phosphate, and nucleoside di- and tri-phosphates.</text>
</comment>
<comment type="biophysicochemical properties">
    <phDependence>
        <text evidence="3">Optimum pH is 9.0.</text>
    </phDependence>
    <temperatureDependence>
        <text evidence="3">Optimum temperature is 50 degrees Celsius.</text>
    </temperatureDependence>
</comment>
<comment type="interaction">
    <interactant intactId="EBI-358858">
        <id>O14735</id>
    </interactant>
    <interactant intactId="EBI-12701138">
        <id>P41181</id>
        <label>AQP2</label>
    </interactant>
    <organismsDiffer>false</organismsDiffer>
    <experiments>3</experiments>
</comment>
<comment type="interaction">
    <interactant intactId="EBI-358858">
        <id>O14735</id>
    </interactant>
    <interactant intactId="EBI-13059134">
        <id>Q13520</id>
        <label>AQP6</label>
    </interactant>
    <organismsDiffer>false</organismsDiffer>
    <experiments>3</experiments>
</comment>
<comment type="interaction">
    <interactant intactId="EBI-358858">
        <id>O14735</id>
    </interactant>
    <interactant intactId="EBI-11343438">
        <id>Q3SXY8</id>
        <label>ARL13B</label>
    </interactant>
    <organismsDiffer>false</organismsDiffer>
    <experiments>3</experiments>
</comment>
<comment type="interaction">
    <interactant intactId="EBI-358858">
        <id>O14735</id>
    </interactant>
    <interactant intactId="EBI-12935759">
        <id>O15342</id>
        <label>ATP6V0E1</label>
    </interactant>
    <organismsDiffer>false</organismsDiffer>
    <experiments>3</experiments>
</comment>
<comment type="interaction">
    <interactant intactId="EBI-358858">
        <id>O14735</id>
    </interactant>
    <interactant intactId="EBI-7996695">
        <id>Q8WZ55</id>
        <label>BSND</label>
    </interactant>
    <organismsDiffer>false</organismsDiffer>
    <experiments>3</experiments>
</comment>
<comment type="interaction">
    <interactant intactId="EBI-358858">
        <id>O14735</id>
    </interactant>
    <interactant intactId="EBI-7797864">
        <id>P11912</id>
        <label>CD79A</label>
    </interactant>
    <organismsDiffer>false</organismsDiffer>
    <experiments>3</experiments>
</comment>
<comment type="interaction">
    <interactant intactId="EBI-358858">
        <id>O14735</id>
    </interactant>
    <interactant intactId="EBI-2130213">
        <id>Q99675</id>
        <label>CGRRF1</label>
    </interactant>
    <organismsDiffer>false</organismsDiffer>
    <experiments>3</experiments>
</comment>
<comment type="interaction">
    <interactant intactId="EBI-358858">
        <id>O14735</id>
    </interactant>
    <interactant intactId="EBI-1045797">
        <id>Q8N5K1</id>
        <label>CISD2</label>
    </interactant>
    <organismsDiffer>false</organismsDiffer>
    <experiments>3</experiments>
</comment>
<comment type="interaction">
    <interactant intactId="EBI-358858">
        <id>O14735</id>
    </interactant>
    <interactant intactId="EBI-18013275">
        <id>Q7Z7G2</id>
        <label>CPLX4</label>
    </interactant>
    <organismsDiffer>false</organismsDiffer>
    <experiments>3</experiments>
</comment>
<comment type="interaction">
    <interactant intactId="EBI-358858">
        <id>O14735</id>
    </interactant>
    <interactant intactId="EBI-8646596">
        <id>P49447</id>
        <label>CYB561</label>
    </interactant>
    <organismsDiffer>false</organismsDiffer>
    <experiments>3</experiments>
</comment>
<comment type="interaction">
    <interactant intactId="EBI-358858">
        <id>O14735</id>
    </interactant>
    <interactant intactId="EBI-1046040">
        <id>P00387</id>
        <label>CYB5R3</label>
    </interactant>
    <organismsDiffer>false</organismsDiffer>
    <experiments>3</experiments>
</comment>
<comment type="interaction">
    <interactant intactId="EBI-358858">
        <id>O14735</id>
    </interactant>
    <interactant intactId="EBI-3917045">
        <id>Q6PI48</id>
        <label>DARS2</label>
    </interactant>
    <organismsDiffer>false</organismsDiffer>
    <experiments>3</experiments>
</comment>
<comment type="interaction">
    <interactant intactId="EBI-358858">
        <id>O14735</id>
    </interactant>
    <interactant intactId="EBI-3915253">
        <id>Q15125</id>
        <label>EBP</label>
    </interactant>
    <organismsDiffer>false</organismsDiffer>
    <experiments>3</experiments>
</comment>
<comment type="interaction">
    <interactant intactId="EBI-358858">
        <id>O14735</id>
    </interactant>
    <interactant intactId="EBI-781551">
        <id>Q9Y282</id>
        <label>ERGIC3</label>
    </interactant>
    <organismsDiffer>false</organismsDiffer>
    <experiments>3</experiments>
</comment>
<comment type="interaction">
    <interactant intactId="EBI-358858">
        <id>O14735</id>
    </interactant>
    <interactant intactId="EBI-17640610">
        <id>P34910-2</id>
        <label>EVI2B</label>
    </interactant>
    <organismsDiffer>false</organismsDiffer>
    <experiments>3</experiments>
</comment>
<comment type="interaction">
    <interactant intactId="EBI-358858">
        <id>O14735</id>
    </interactant>
    <interactant intactId="EBI-18304435">
        <id>Q5JX71</id>
        <label>FAM209A</label>
    </interactant>
    <organismsDiffer>false</organismsDiffer>
    <experiments>3</experiments>
</comment>
<comment type="interaction">
    <interactant intactId="EBI-358858">
        <id>O14735</id>
    </interactant>
    <interactant intactId="EBI-17187481">
        <id>P12318-2</id>
        <label>FCGR2A</label>
    </interactant>
    <organismsDiffer>false</organismsDiffer>
    <experiments>3</experiments>
</comment>
<comment type="interaction">
    <interactant intactId="EBI-358858">
        <id>O14735</id>
    </interactant>
    <interactant intactId="EBI-2833872">
        <id>O15552</id>
        <label>FFAR2</label>
    </interactant>
    <organismsDiffer>false</organismsDiffer>
    <experiments>3</experiments>
</comment>
<comment type="interaction">
    <interactant intactId="EBI-358858">
        <id>O14735</id>
    </interactant>
    <interactant intactId="EBI-3918971">
        <id>Q9Y680</id>
        <label>FKBP7</label>
    </interactant>
    <organismsDiffer>false</organismsDiffer>
    <experiments>3</experiments>
</comment>
<comment type="interaction">
    <interactant intactId="EBI-358858">
        <id>O14735</id>
    </interactant>
    <interactant intactId="EBI-17565645">
        <id>P08034</id>
        <label>GJB1</label>
    </interactant>
    <organismsDiffer>false</organismsDiffer>
    <experiments>3</experiments>
</comment>
<comment type="interaction">
    <interactant intactId="EBI-358858">
        <id>O14735</id>
    </interactant>
    <interactant intactId="EBI-712073">
        <id>Q8NBJ4</id>
        <label>GOLM1</label>
    </interactant>
    <organismsDiffer>false</organismsDiffer>
    <experiments>3</experiments>
</comment>
<comment type="interaction">
    <interactant intactId="EBI-358858">
        <id>O14735</id>
    </interactant>
    <interactant intactId="EBI-17935713">
        <id>Q96P66</id>
        <label>GPR101</label>
    </interactant>
    <organismsDiffer>false</organismsDiffer>
    <experiments>3</experiments>
</comment>
<comment type="interaction">
    <interactant intactId="EBI-358858">
        <id>O14735</id>
    </interactant>
    <interactant intactId="EBI-11955647">
        <id>Q8TDV0</id>
        <label>GPR151</label>
    </interactant>
    <organismsDiffer>false</organismsDiffer>
    <experiments>3</experiments>
</comment>
<comment type="interaction">
    <interactant intactId="EBI-358858">
        <id>O14735</id>
    </interactant>
    <interactant intactId="EBI-13345167">
        <id>Q8TDT2</id>
        <label>GPR152</label>
    </interactant>
    <organismsDiffer>false</organismsDiffer>
    <experiments>3</experiments>
</comment>
<comment type="interaction">
    <interactant intactId="EBI-358858">
        <id>O14735</id>
    </interactant>
    <interactant intactId="EBI-11721746">
        <id>Q8TED1</id>
        <label>GPX8</label>
    </interactant>
    <organismsDiffer>false</organismsDiffer>
    <experiments>3</experiments>
</comment>
<comment type="interaction">
    <interactant intactId="EBI-358858">
        <id>O14735</id>
    </interactant>
    <interactant intactId="EBI-18053395">
        <id>Q7Z5P4</id>
        <label>HSD17B13</label>
    </interactant>
    <organismsDiffer>false</organismsDiffer>
    <experiments>3</experiments>
</comment>
<comment type="interaction">
    <interactant intactId="EBI-358858">
        <id>O14735</id>
    </interactant>
    <interactant intactId="EBI-725665">
        <id>Q9Y5U9</id>
        <label>IER3IP1</label>
    </interactant>
    <organismsDiffer>false</organismsDiffer>
    <experiments>3</experiments>
</comment>
<comment type="interaction">
    <interactant intactId="EBI-358858">
        <id>O14735</id>
    </interactant>
    <interactant intactId="EBI-947015">
        <id>P24592</id>
        <label>IGFBP6</label>
    </interactant>
    <organismsDiffer>false</organismsDiffer>
    <experiments>3</experiments>
</comment>
<comment type="interaction">
    <interactant intactId="EBI-358858">
        <id>O14735</id>
    </interactant>
    <interactant intactId="EBI-10266796">
        <id>Q8N5M9</id>
        <label>JAGN1</label>
    </interactant>
    <organismsDiffer>false</organismsDiffer>
    <experiments>3</experiments>
</comment>
<comment type="interaction">
    <interactant intactId="EBI-358858">
        <id>O14735</id>
    </interactant>
    <interactant intactId="EBI-3914675">
        <id>O00180</id>
        <label>KCNK1</label>
    </interactant>
    <organismsDiffer>false</organismsDiffer>
    <experiments>3</experiments>
</comment>
<comment type="interaction">
    <interactant intactId="EBI-358858">
        <id>O14735</id>
    </interactant>
    <interactant intactId="EBI-8632435">
        <id>P43628</id>
        <label>KIR2DL3</label>
    </interactant>
    <organismsDiffer>false</organismsDiffer>
    <experiments>3</experiments>
</comment>
<comment type="interaction">
    <interactant intactId="EBI-358858">
        <id>O14735</id>
    </interactant>
    <interactant intactId="EBI-739832">
        <id>Q8TBB1</id>
        <label>LNX1</label>
    </interactant>
    <organismsDiffer>false</organismsDiffer>
    <experiments>3</experiments>
</comment>
<comment type="interaction">
    <interactant intactId="EBI-358858">
        <id>O14735</id>
    </interactant>
    <interactant intactId="EBI-11956541">
        <id>Q9GZY8-5</id>
        <label>MFF</label>
    </interactant>
    <organismsDiffer>false</organismsDiffer>
    <experiments>3</experiments>
</comment>
<comment type="interaction">
    <interactant intactId="EBI-358858">
        <id>O14735</id>
    </interactant>
    <interactant intactId="EBI-724754">
        <id>O14880</id>
        <label>MGST3</label>
    </interactant>
    <organismsDiffer>false</organismsDiffer>
    <experiments>3</experiments>
</comment>
<comment type="interaction">
    <interactant intactId="EBI-358858">
        <id>O14735</id>
    </interactant>
    <interactant intactId="EBI-12839612">
        <id>Q96JA4</id>
        <label>MS4A14</label>
    </interactant>
    <organismsDiffer>false</organismsDiffer>
    <experiments>3</experiments>
</comment>
<comment type="interaction">
    <interactant intactId="EBI-358858">
        <id>O14735</id>
    </interactant>
    <interactant intactId="EBI-3923617">
        <id>Q9H2K0</id>
        <label>MTIF3</label>
    </interactant>
    <organismsDiffer>false</organismsDiffer>
    <experiments>3</experiments>
</comment>
<comment type="interaction">
    <interactant intactId="EBI-358858">
        <id>O14735</id>
    </interactant>
    <interactant intactId="EBI-12382569">
        <id>Q2M2E3</id>
        <label>ODF4</label>
    </interactant>
    <organismsDiffer>false</organismsDiffer>
    <experiments>3</experiments>
</comment>
<comment type="interaction">
    <interactant intactId="EBI-358858">
        <id>O14735</id>
    </interactant>
    <interactant intactId="EBI-12188331">
        <id>P60201-2</id>
        <label>PLP1</label>
    </interactant>
    <organismsDiffer>false</organismsDiffer>
    <experiments>3</experiments>
</comment>
<comment type="interaction">
    <interactant intactId="EBI-358858">
        <id>O14735</id>
    </interactant>
    <interactant intactId="EBI-10269209">
        <id>Q8NC24</id>
        <label>RELL2</label>
    </interactant>
    <organismsDiffer>false</organismsDiffer>
    <experiments>3</experiments>
</comment>
<comment type="interaction">
    <interactant intactId="EBI-358858">
        <id>O14735</id>
    </interactant>
    <interactant intactId="EBI-10192441">
        <id>Q86VR2</id>
        <label>RETREG3</label>
    </interactant>
    <organismsDiffer>false</organismsDiffer>
    <experiments>3</experiments>
</comment>
<comment type="interaction">
    <interactant intactId="EBI-358858">
        <id>O14735</id>
    </interactant>
    <interactant intactId="EBI-2466594">
        <id>Q6ZMZ0</id>
        <label>RNF19B</label>
    </interactant>
    <organismsDiffer>false</organismsDiffer>
    <experiments>3</experiments>
</comment>
<comment type="interaction">
    <interactant intactId="EBI-358858">
        <id>O14735</id>
    </interactant>
    <interactant intactId="EBI-740467">
        <id>O95197</id>
        <label>RTN3</label>
    </interactant>
    <organismsDiffer>false</organismsDiffer>
    <experiments>3</experiments>
</comment>
<comment type="interaction">
    <interactant intactId="EBI-358858">
        <id>O14735</id>
    </interactant>
    <interactant intactId="EBI-4395514">
        <id>Q8N9R8</id>
        <label>SCAI</label>
    </interactant>
    <organismsDiffer>false</organismsDiffer>
    <experiments>3</experiments>
</comment>
<comment type="interaction">
    <interactant intactId="EBI-358858">
        <id>O14735</id>
    </interactant>
    <interactant intactId="EBI-727004">
        <id>O00560</id>
        <label>SDCBP</label>
    </interactant>
    <organismsDiffer>false</organismsDiffer>
    <experiments>3</experiments>
</comment>
<comment type="interaction">
    <interactant intactId="EBI-358858">
        <id>O14735</id>
    </interactant>
    <interactant intactId="EBI-17640454">
        <id>Q96PQ1</id>
        <label>SIGLEC12</label>
    </interactant>
    <organismsDiffer>false</organismsDiffer>
    <experiments>3</experiments>
</comment>
<comment type="interaction">
    <interactant intactId="EBI-358858">
        <id>O14735</id>
    </interactant>
    <interactant intactId="EBI-18159983">
        <id>Q3KNW5</id>
        <label>SLC10A6</label>
    </interactant>
    <organismsDiffer>false</organismsDiffer>
    <experiments>3</experiments>
</comment>
<comment type="interaction">
    <interactant intactId="EBI-358858">
        <id>O14735</id>
    </interactant>
    <interactant intactId="EBI-3921243">
        <id>O60669</id>
        <label>SLC16A7</label>
    </interactant>
    <organismsDiffer>false</organismsDiffer>
    <experiments>3</experiments>
</comment>
<comment type="interaction">
    <interactant intactId="EBI-358858">
        <id>O14735</id>
    </interactant>
    <interactant intactId="EBI-4289564">
        <id>P30825</id>
        <label>SLC7A1</label>
    </interactant>
    <organismsDiffer>false</organismsDiffer>
    <experiments>3</experiments>
</comment>
<comment type="interaction">
    <interactant intactId="EBI-358858">
        <id>O14735</id>
    </interactant>
    <interactant intactId="EBI-12947623">
        <id>Q96MV1</id>
        <label>TLCD4</label>
    </interactant>
    <organismsDiffer>false</organismsDiffer>
    <experiments>3</experiments>
</comment>
<comment type="interaction">
    <interactant intactId="EBI-358858">
        <id>O14735</id>
    </interactant>
    <interactant intactId="EBI-6447886">
        <id>Q9Y320</id>
        <label>TMX2</label>
    </interactant>
    <organismsDiffer>false</organismsDiffer>
    <experiments>3</experiments>
</comment>
<comment type="interaction">
    <interactant intactId="EBI-358858">
        <id>O14735</id>
    </interactant>
    <interactant intactId="EBI-13356252">
        <id>Q86WB7-2</id>
        <label>UNC93A</label>
    </interactant>
    <organismsDiffer>false</organismsDiffer>
    <experiments>3</experiments>
</comment>
<comment type="interaction">
    <interactant intactId="EBI-358858">
        <id>O14735</id>
    </interactant>
    <interactant intactId="EBI-1055364">
        <id>Q3ZAQ7</id>
        <label>VMA21</label>
    </interactant>
    <organismsDiffer>false</organismsDiffer>
    <experiments>3</experiments>
</comment>
<comment type="subcellular location">
    <subcellularLocation>
        <location evidence="7">Endoplasmic reticulum membrane</location>
        <topology evidence="2">Multi-pass membrane protein</topology>
    </subcellularLocation>
    <subcellularLocation>
        <location evidence="7">Cell membrane</location>
        <topology evidence="2">Multi-pass membrane protein</topology>
    </subcellularLocation>
</comment>
<comment type="alternative products">
    <event type="alternative splicing"/>
    <isoform>
        <id>O14735-1</id>
        <name>1</name>
        <sequence type="displayed"/>
    </isoform>
    <isoform>
        <id>O14735-2</id>
        <name>2</name>
        <sequence type="described" ref="VSP_013618 VSP_013619 VSP_013620"/>
    </isoform>
    <isoform>
        <id>O14735-3</id>
        <name>3</name>
        <sequence type="described" ref="VSP_054767"/>
    </isoform>
</comment>
<comment type="tissue specificity">
    <text evidence="3">Detected in placenta (at protein level). Widely expressed. Higher expression in adult liver and skeletal muscle, slightly lower levels seen in pancreas, kidney, lung, placenta, brain, heart, leukocyte, colon, small intestine, ovary, testis, prostate, thymus and spleen. In fetus, expressed in kidney, liver, lung and brain.</text>
</comment>
<comment type="similarity">
    <text evidence="6">Belongs to the CDP-alcohol phosphatidyltransferase class-I family.</text>
</comment>
<dbReference type="EC" id="2.7.8.11" evidence="3 4"/>
<dbReference type="EMBL" id="AF014807">
    <property type="protein sequence ID" value="AAB94860.1"/>
    <property type="molecule type" value="mRNA"/>
</dbReference>
<dbReference type="EMBL" id="BT007301">
    <property type="protein sequence ID" value="AAP35965.1"/>
    <property type="molecule type" value="mRNA"/>
</dbReference>
<dbReference type="EMBL" id="AK131349">
    <property type="protein sequence ID" value="BAD18505.1"/>
    <property type="molecule type" value="mRNA"/>
</dbReference>
<dbReference type="EMBL" id="AK300805">
    <property type="protein sequence ID" value="BAG62462.1"/>
    <property type="molecule type" value="mRNA"/>
</dbReference>
<dbReference type="EMBL" id="CR542016">
    <property type="protein sequence ID" value="CAG46813.1"/>
    <property type="molecule type" value="mRNA"/>
</dbReference>
<dbReference type="EMBL" id="AC120114">
    <property type="status" value="NOT_ANNOTATED_CDS"/>
    <property type="molecule type" value="Genomic_DNA"/>
</dbReference>
<dbReference type="EMBL" id="BC001444">
    <property type="protein sequence ID" value="AAH01444.1"/>
    <property type="molecule type" value="mRNA"/>
</dbReference>
<dbReference type="CCDS" id="CCDS10657.1">
    <molecule id="O14735-1"/>
</dbReference>
<dbReference type="CCDS" id="CCDS67002.1">
    <molecule id="O14735-3"/>
</dbReference>
<dbReference type="RefSeq" id="NP_001273514.1">
    <molecule id="O14735-3"/>
    <property type="nucleotide sequence ID" value="NM_001286585.2"/>
</dbReference>
<dbReference type="RefSeq" id="NP_006310.1">
    <molecule id="O14735-1"/>
    <property type="nucleotide sequence ID" value="NM_006319.5"/>
</dbReference>
<dbReference type="SMR" id="O14735"/>
<dbReference type="BioGRID" id="115692">
    <property type="interactions" value="199"/>
</dbReference>
<dbReference type="DIP" id="DIP-54492N"/>
<dbReference type="FunCoup" id="O14735">
    <property type="interactions" value="2251"/>
</dbReference>
<dbReference type="IntAct" id="O14735">
    <property type="interactions" value="128"/>
</dbReference>
<dbReference type="MINT" id="O14735"/>
<dbReference type="STRING" id="9606.ENSP00000219789"/>
<dbReference type="DrugBank" id="DB03106">
    <property type="generic name" value="scyllo-inositol"/>
</dbReference>
<dbReference type="SwissLipids" id="SLP:000000533"/>
<dbReference type="iPTMnet" id="O14735"/>
<dbReference type="PhosphoSitePlus" id="O14735"/>
<dbReference type="SwissPalm" id="O14735"/>
<dbReference type="BioMuta" id="CDIPT"/>
<dbReference type="jPOST" id="O14735"/>
<dbReference type="MassIVE" id="O14735"/>
<dbReference type="PaxDb" id="9606-ENSP00000219789"/>
<dbReference type="PeptideAtlas" id="O14735"/>
<dbReference type="ProteomicsDB" id="42746"/>
<dbReference type="ProteomicsDB" id="48197">
    <molecule id="O14735-1"/>
</dbReference>
<dbReference type="ProteomicsDB" id="48198">
    <molecule id="O14735-2"/>
</dbReference>
<dbReference type="Pumba" id="O14735"/>
<dbReference type="Antibodypedia" id="26862">
    <property type="antibodies" value="70 antibodies from 17 providers"/>
</dbReference>
<dbReference type="DNASU" id="10423"/>
<dbReference type="Ensembl" id="ENST00000219789.11">
    <molecule id="O14735-1"/>
    <property type="protein sequence ID" value="ENSP00000219789.6"/>
    <property type="gene ID" value="ENSG00000103502.14"/>
</dbReference>
<dbReference type="Ensembl" id="ENST00000566113.5">
    <molecule id="O14735-3"/>
    <property type="protein sequence ID" value="ENSP00000457340.1"/>
    <property type="gene ID" value="ENSG00000103502.14"/>
</dbReference>
<dbReference type="Ensembl" id="ENST00000569956.5">
    <molecule id="O14735-1"/>
    <property type="protein sequence ID" value="ENSP00000457339.1"/>
    <property type="gene ID" value="ENSG00000103502.14"/>
</dbReference>
<dbReference type="Ensembl" id="ENST00000570016.5">
    <molecule id="O14735-1"/>
    <property type="protein sequence ID" value="ENSP00000454453.1"/>
    <property type="gene ID" value="ENSG00000103502.14"/>
</dbReference>
<dbReference type="GeneID" id="10423"/>
<dbReference type="KEGG" id="hsa:10423"/>
<dbReference type="MANE-Select" id="ENST00000219789.11">
    <property type="protein sequence ID" value="ENSP00000219789.6"/>
    <property type="RefSeq nucleotide sequence ID" value="NM_006319.5"/>
    <property type="RefSeq protein sequence ID" value="NP_006310.1"/>
</dbReference>
<dbReference type="UCSC" id="uc002dum.5">
    <molecule id="O14735-1"/>
    <property type="organism name" value="human"/>
</dbReference>
<dbReference type="AGR" id="HGNC:1769"/>
<dbReference type="CTD" id="10423"/>
<dbReference type="DisGeNET" id="10423"/>
<dbReference type="GeneCards" id="CDIPT"/>
<dbReference type="HGNC" id="HGNC:1769">
    <property type="gene designation" value="CDIPT"/>
</dbReference>
<dbReference type="HPA" id="ENSG00000103502">
    <property type="expression patterns" value="Low tissue specificity"/>
</dbReference>
<dbReference type="MIM" id="605893">
    <property type="type" value="gene"/>
</dbReference>
<dbReference type="neXtProt" id="NX_O14735"/>
<dbReference type="OpenTargets" id="ENSG00000103502"/>
<dbReference type="PharmGKB" id="PA26306"/>
<dbReference type="VEuPathDB" id="HostDB:ENSG00000103502"/>
<dbReference type="eggNOG" id="KOG3240">
    <property type="taxonomic scope" value="Eukaryota"/>
</dbReference>
<dbReference type="GeneTree" id="ENSGT00940000154169"/>
<dbReference type="HOGENOM" id="CLU_067602_2_0_1"/>
<dbReference type="InParanoid" id="O14735"/>
<dbReference type="OMA" id="AQTYSEN"/>
<dbReference type="OrthoDB" id="10251079at2759"/>
<dbReference type="PAN-GO" id="O14735">
    <property type="GO annotations" value="3 GO annotations based on evolutionary models"/>
</dbReference>
<dbReference type="PhylomeDB" id="O14735"/>
<dbReference type="TreeFam" id="TF314603"/>
<dbReference type="BioCyc" id="MetaCyc:HS02513-MONOMER"/>
<dbReference type="BRENDA" id="2.7.8.11">
    <property type="organism ID" value="2681"/>
</dbReference>
<dbReference type="PathwayCommons" id="O14735"/>
<dbReference type="Reactome" id="R-HSA-1483226">
    <property type="pathway name" value="Synthesis of PI"/>
</dbReference>
<dbReference type="SignaLink" id="O14735"/>
<dbReference type="BioGRID-ORCS" id="10423">
    <property type="hits" value="597 hits in 1173 CRISPR screens"/>
</dbReference>
<dbReference type="ChiTaRS" id="CDIPT">
    <property type="organism name" value="human"/>
</dbReference>
<dbReference type="GeneWiki" id="CDIPT"/>
<dbReference type="GenomeRNAi" id="10423"/>
<dbReference type="Pharos" id="O14735">
    <property type="development level" value="Tbio"/>
</dbReference>
<dbReference type="PRO" id="PR:O14735"/>
<dbReference type="Proteomes" id="UP000005640">
    <property type="component" value="Chromosome 16"/>
</dbReference>
<dbReference type="RNAct" id="O14735">
    <property type="molecule type" value="protein"/>
</dbReference>
<dbReference type="Bgee" id="ENSG00000103502">
    <property type="expression patterns" value="Expressed in parotid gland and 207 other cell types or tissues"/>
</dbReference>
<dbReference type="ExpressionAtlas" id="O14735">
    <property type="expression patterns" value="baseline and differential"/>
</dbReference>
<dbReference type="GO" id="GO:0005789">
    <property type="term" value="C:endoplasmic reticulum membrane"/>
    <property type="evidence" value="ECO:0000304"/>
    <property type="project" value="Reactome"/>
</dbReference>
<dbReference type="GO" id="GO:0005794">
    <property type="term" value="C:Golgi apparatus"/>
    <property type="evidence" value="ECO:0000318"/>
    <property type="project" value="GO_Central"/>
</dbReference>
<dbReference type="GO" id="GO:0016020">
    <property type="term" value="C:membrane"/>
    <property type="evidence" value="ECO:0000314"/>
    <property type="project" value="UniProtKB"/>
</dbReference>
<dbReference type="GO" id="GO:0005886">
    <property type="term" value="C:plasma membrane"/>
    <property type="evidence" value="ECO:0007669"/>
    <property type="project" value="UniProtKB-SubCell"/>
</dbReference>
<dbReference type="GO" id="GO:0043178">
    <property type="term" value="F:alcohol binding"/>
    <property type="evidence" value="ECO:0007669"/>
    <property type="project" value="Ensembl"/>
</dbReference>
<dbReference type="GO" id="GO:0030246">
    <property type="term" value="F:carbohydrate binding"/>
    <property type="evidence" value="ECO:0007669"/>
    <property type="project" value="Ensembl"/>
</dbReference>
<dbReference type="GO" id="GO:0003881">
    <property type="term" value="F:CDP-diacylglycerol-inositol 3-phosphatidyltransferase activity"/>
    <property type="evidence" value="ECO:0000314"/>
    <property type="project" value="UniProtKB"/>
</dbReference>
<dbReference type="GO" id="GO:0019992">
    <property type="term" value="F:diacylglycerol binding"/>
    <property type="evidence" value="ECO:0007669"/>
    <property type="project" value="Ensembl"/>
</dbReference>
<dbReference type="GO" id="GO:0030145">
    <property type="term" value="F:manganese ion binding"/>
    <property type="evidence" value="ECO:0007669"/>
    <property type="project" value="Ensembl"/>
</dbReference>
<dbReference type="GO" id="GO:0046341">
    <property type="term" value="P:CDP-diacylglycerol metabolic process"/>
    <property type="evidence" value="ECO:0007669"/>
    <property type="project" value="Ensembl"/>
</dbReference>
<dbReference type="GO" id="GO:0006661">
    <property type="term" value="P:phosphatidylinositol biosynthetic process"/>
    <property type="evidence" value="ECO:0000314"/>
    <property type="project" value="UniProtKB"/>
</dbReference>
<dbReference type="FunFam" id="1.20.120.1760:FF:000003">
    <property type="entry name" value="CDP-diacylglycerol--inositol 3-phosphatidyltransferase"/>
    <property type="match status" value="1"/>
</dbReference>
<dbReference type="Gene3D" id="1.20.120.1760">
    <property type="match status" value="1"/>
</dbReference>
<dbReference type="InterPro" id="IPR000462">
    <property type="entry name" value="CDP-OH_P_trans"/>
</dbReference>
<dbReference type="InterPro" id="IPR043130">
    <property type="entry name" value="CDP-OH_PTrfase_TM_dom"/>
</dbReference>
<dbReference type="InterPro" id="IPR048254">
    <property type="entry name" value="CDP_ALCOHOL_P_TRANSF_CS"/>
</dbReference>
<dbReference type="InterPro" id="IPR014387">
    <property type="entry name" value="CDP_diag_ino_3_P_euk"/>
</dbReference>
<dbReference type="PANTHER" id="PTHR15362:SF4">
    <property type="entry name" value="CDP-DIACYLGLYCEROL--INOSITOL 3-PHOSPHATIDYLTRANSFERASE"/>
    <property type="match status" value="1"/>
</dbReference>
<dbReference type="PANTHER" id="PTHR15362">
    <property type="entry name" value="PHOSPHATIDYLINOSITOL SYNTHASE"/>
    <property type="match status" value="1"/>
</dbReference>
<dbReference type="Pfam" id="PF01066">
    <property type="entry name" value="CDP-OH_P_transf"/>
    <property type="match status" value="1"/>
</dbReference>
<dbReference type="PIRSF" id="PIRSF000848">
    <property type="entry name" value="CDP_diag_ino_3_P"/>
    <property type="match status" value="1"/>
</dbReference>
<dbReference type="PROSITE" id="PS00379">
    <property type="entry name" value="CDP_ALCOHOL_P_TRANSF"/>
    <property type="match status" value="1"/>
</dbReference>
<accession>O14735</accession>
<accession>B4DUV0</accession>
<accession>H3BTV1</accession>
<accession>Q6FGU1</accession>
<accession>Q6ZN70</accession>